<name>FSCG_DICDI</name>
<keyword id="KW-0325">Glycoprotein</keyword>
<keyword id="KW-0472">Membrane</keyword>
<keyword id="KW-0675">Receptor</keyword>
<keyword id="KW-1185">Reference proteome</keyword>
<keyword id="KW-0732">Signal</keyword>
<keyword id="KW-0812">Transmembrane</keyword>
<keyword id="KW-1133">Transmembrane helix</keyword>
<protein>
    <recommendedName>
        <fullName>Frizzled/smoothened-like sans CRD protein G</fullName>
    </recommendedName>
</protein>
<gene>
    <name type="primary">fscG</name>
    <name type="ORF">DDB_G0292156</name>
</gene>
<accession>Q54DR6</accession>
<comment type="subcellular location">
    <subcellularLocation>
        <location evidence="2">Membrane</location>
        <topology evidence="2">Multi-pass membrane protein</topology>
    </subcellularLocation>
</comment>
<comment type="similarity">
    <text evidence="2">Belongs to the G-protein coupled receptor Fz/Smo family.</text>
</comment>
<evidence type="ECO:0000255" key="1"/>
<evidence type="ECO:0000305" key="2"/>
<sequence length="453" mass="52054">MIYILKNFIIILFFLLIILKRIESQSLPSLPSPTIYKSSQCRGDLVYRNVSNRMEDEKIGFTFVQYNGTYQSCVIPCPSPFFTLDEWNKFLYMSLVMGTISFLCGLFLLITYSPIVNKTHNRHTIGVMCMSFGVCLAMCSDMWNFGSNFTDQKSICPSPGQYLTTSNSRCLGSGIVLQFGGVFGFLNWTLLSFDLFMNIKGIITKNYDKYYFVATFIIAIIFTFVPIVNDQYSMSYIGLGCWLGSAVYQLIFFWILLSICLIVSSVFIILILKEIYIIIKQSKQKTSLKGNIRPLLCITVTSFAFFYMFFYYISIVIEGDYYERILNEYTDCLMDPTKDVSECKFPRMSVANEFVFLLCLRLLGIGAFIFYGINKEVKKIWLNSFWFNNSFVGKYIGSKRSMGNDITNSYASKAYSKNYNNNNSINSYNSGLELSIIDMSCNKDDNFKPIIIK</sequence>
<dbReference type="EMBL" id="AAFI02000187">
    <property type="protein sequence ID" value="EAL61434.1"/>
    <property type="molecule type" value="Genomic_DNA"/>
</dbReference>
<dbReference type="RefSeq" id="XP_629806.1">
    <property type="nucleotide sequence ID" value="XM_629804.1"/>
</dbReference>
<dbReference type="SMR" id="Q54DR6"/>
<dbReference type="FunCoup" id="Q54DR6">
    <property type="interactions" value="19"/>
</dbReference>
<dbReference type="GlyCosmos" id="Q54DR6">
    <property type="glycosylation" value="3 sites, No reported glycans"/>
</dbReference>
<dbReference type="GlyGen" id="Q54DR6">
    <property type="glycosylation" value="3 sites"/>
</dbReference>
<dbReference type="PaxDb" id="44689-DDB0231720"/>
<dbReference type="EnsemblProtists" id="EAL61434">
    <property type="protein sequence ID" value="EAL61434"/>
    <property type="gene ID" value="DDB_G0292156"/>
</dbReference>
<dbReference type="GeneID" id="8628487"/>
<dbReference type="KEGG" id="ddi:DDB_G0292156"/>
<dbReference type="dictyBase" id="DDB_G0292156">
    <property type="gene designation" value="fscG"/>
</dbReference>
<dbReference type="VEuPathDB" id="AmoebaDB:DDB_G0292156"/>
<dbReference type="eggNOG" id="ENOG502RF6Q">
    <property type="taxonomic scope" value="Eukaryota"/>
</dbReference>
<dbReference type="HOGENOM" id="CLU_036764_0_0_1"/>
<dbReference type="InParanoid" id="Q54DR6"/>
<dbReference type="PhylomeDB" id="Q54DR6"/>
<dbReference type="PRO" id="PR:Q54DR6"/>
<dbReference type="Proteomes" id="UP000002195">
    <property type="component" value="Chromosome 6"/>
</dbReference>
<dbReference type="GO" id="GO:0016020">
    <property type="term" value="C:membrane"/>
    <property type="evidence" value="ECO:0007669"/>
    <property type="project" value="UniProtKB-SubCell"/>
</dbReference>
<dbReference type="Gene3D" id="1.20.1070.10">
    <property type="entry name" value="Rhodopsin 7-helix transmembrane proteins"/>
    <property type="match status" value="1"/>
</dbReference>
<dbReference type="InterPro" id="IPR050949">
    <property type="entry name" value="GPCR_Fz/Smo-like"/>
</dbReference>
<dbReference type="PANTHER" id="PTHR31787:SF7">
    <property type="entry name" value="FRIZZLED_SMOOTHENED-LIKE SANS CRD PROTEIN F-RELATED"/>
    <property type="match status" value="1"/>
</dbReference>
<dbReference type="PANTHER" id="PTHR31787">
    <property type="entry name" value="G-PROTEIN-COUPLED RECEPTOR GPCR FAMILY PROTEIN"/>
    <property type="match status" value="1"/>
</dbReference>
<proteinExistence type="inferred from homology"/>
<organism>
    <name type="scientific">Dictyostelium discoideum</name>
    <name type="common">Social amoeba</name>
    <dbReference type="NCBI Taxonomy" id="44689"/>
    <lineage>
        <taxon>Eukaryota</taxon>
        <taxon>Amoebozoa</taxon>
        <taxon>Evosea</taxon>
        <taxon>Eumycetozoa</taxon>
        <taxon>Dictyostelia</taxon>
        <taxon>Dictyosteliales</taxon>
        <taxon>Dictyosteliaceae</taxon>
        <taxon>Dictyostelium</taxon>
    </lineage>
</organism>
<feature type="signal peptide" evidence="1">
    <location>
        <begin position="1"/>
        <end position="24"/>
    </location>
</feature>
<feature type="chain" id="PRO_0000371360" description="Frizzled/smoothened-like sans CRD protein G">
    <location>
        <begin position="25"/>
        <end position="453"/>
    </location>
</feature>
<feature type="topological domain" description="Extracellular" evidence="1">
    <location>
        <begin position="25"/>
        <end position="89"/>
    </location>
</feature>
<feature type="transmembrane region" description="Helical; Name=1" evidence="1">
    <location>
        <begin position="90"/>
        <end position="110"/>
    </location>
</feature>
<feature type="topological domain" description="Cytoplasmic" evidence="1">
    <location>
        <begin position="111"/>
        <end position="124"/>
    </location>
</feature>
<feature type="transmembrane region" description="Helical; Name=2" evidence="1">
    <location>
        <begin position="125"/>
        <end position="145"/>
    </location>
</feature>
<feature type="topological domain" description="Extracellular" evidence="1">
    <location>
        <begin position="146"/>
        <end position="170"/>
    </location>
</feature>
<feature type="transmembrane region" description="Helical; Name=3" evidence="1">
    <location>
        <begin position="171"/>
        <end position="191"/>
    </location>
</feature>
<feature type="topological domain" description="Cytoplasmic" evidence="1">
    <location>
        <begin position="192"/>
        <end position="209"/>
    </location>
</feature>
<feature type="transmembrane region" description="Helical; Name=4" evidence="1">
    <location>
        <begin position="210"/>
        <end position="230"/>
    </location>
</feature>
<feature type="topological domain" description="Extracellular" evidence="1">
    <location>
        <begin position="231"/>
        <end position="250"/>
    </location>
</feature>
<feature type="transmembrane region" description="Helical; Name=5" evidence="1">
    <location>
        <begin position="251"/>
        <end position="271"/>
    </location>
</feature>
<feature type="topological domain" description="Cytoplasmic" evidence="1">
    <location>
        <begin position="272"/>
        <end position="296"/>
    </location>
</feature>
<feature type="transmembrane region" description="Helical; Name=6" evidence="1">
    <location>
        <begin position="297"/>
        <end position="317"/>
    </location>
</feature>
<feature type="topological domain" description="Extracellular" evidence="1">
    <location>
        <begin position="318"/>
        <end position="352"/>
    </location>
</feature>
<feature type="transmembrane region" description="Helical; Name=7" evidence="1">
    <location>
        <begin position="353"/>
        <end position="373"/>
    </location>
</feature>
<feature type="topological domain" description="Cytoplasmic" evidence="1">
    <location>
        <begin position="374"/>
        <end position="453"/>
    </location>
</feature>
<feature type="glycosylation site" description="N-linked (GlcNAc...) asparagine" evidence="1">
    <location>
        <position position="49"/>
    </location>
</feature>
<feature type="glycosylation site" description="N-linked (GlcNAc...) asparagine" evidence="1">
    <location>
        <position position="67"/>
    </location>
</feature>
<feature type="glycosylation site" description="N-linked (GlcNAc...) asparagine" evidence="1">
    <location>
        <position position="148"/>
    </location>
</feature>
<reference key="1">
    <citation type="journal article" date="2005" name="Nature">
        <title>The genome of the social amoeba Dictyostelium discoideum.</title>
        <authorList>
            <person name="Eichinger L."/>
            <person name="Pachebat J.A."/>
            <person name="Gloeckner G."/>
            <person name="Rajandream M.A."/>
            <person name="Sucgang R."/>
            <person name="Berriman M."/>
            <person name="Song J."/>
            <person name="Olsen R."/>
            <person name="Szafranski K."/>
            <person name="Xu Q."/>
            <person name="Tunggal B."/>
            <person name="Kummerfeld S."/>
            <person name="Madera M."/>
            <person name="Konfortov B.A."/>
            <person name="Rivero F."/>
            <person name="Bankier A.T."/>
            <person name="Lehmann R."/>
            <person name="Hamlin N."/>
            <person name="Davies R."/>
            <person name="Gaudet P."/>
            <person name="Fey P."/>
            <person name="Pilcher K."/>
            <person name="Chen G."/>
            <person name="Saunders D."/>
            <person name="Sodergren E.J."/>
            <person name="Davis P."/>
            <person name="Kerhornou A."/>
            <person name="Nie X."/>
            <person name="Hall N."/>
            <person name="Anjard C."/>
            <person name="Hemphill L."/>
            <person name="Bason N."/>
            <person name="Farbrother P."/>
            <person name="Desany B."/>
            <person name="Just E."/>
            <person name="Morio T."/>
            <person name="Rost R."/>
            <person name="Churcher C.M."/>
            <person name="Cooper J."/>
            <person name="Haydock S."/>
            <person name="van Driessche N."/>
            <person name="Cronin A."/>
            <person name="Goodhead I."/>
            <person name="Muzny D.M."/>
            <person name="Mourier T."/>
            <person name="Pain A."/>
            <person name="Lu M."/>
            <person name="Harper D."/>
            <person name="Lindsay R."/>
            <person name="Hauser H."/>
            <person name="James K.D."/>
            <person name="Quiles M."/>
            <person name="Madan Babu M."/>
            <person name="Saito T."/>
            <person name="Buchrieser C."/>
            <person name="Wardroper A."/>
            <person name="Felder M."/>
            <person name="Thangavelu M."/>
            <person name="Johnson D."/>
            <person name="Knights A."/>
            <person name="Loulseged H."/>
            <person name="Mungall K.L."/>
            <person name="Oliver K."/>
            <person name="Price C."/>
            <person name="Quail M.A."/>
            <person name="Urushihara H."/>
            <person name="Hernandez J."/>
            <person name="Rabbinowitsch E."/>
            <person name="Steffen D."/>
            <person name="Sanders M."/>
            <person name="Ma J."/>
            <person name="Kohara Y."/>
            <person name="Sharp S."/>
            <person name="Simmonds M.N."/>
            <person name="Spiegler S."/>
            <person name="Tivey A."/>
            <person name="Sugano S."/>
            <person name="White B."/>
            <person name="Walker D."/>
            <person name="Woodward J.R."/>
            <person name="Winckler T."/>
            <person name="Tanaka Y."/>
            <person name="Shaulsky G."/>
            <person name="Schleicher M."/>
            <person name="Weinstock G.M."/>
            <person name="Rosenthal A."/>
            <person name="Cox E.C."/>
            <person name="Chisholm R.L."/>
            <person name="Gibbs R.A."/>
            <person name="Loomis W.F."/>
            <person name="Platzer M."/>
            <person name="Kay R.R."/>
            <person name="Williams J.G."/>
            <person name="Dear P.H."/>
            <person name="Noegel A.A."/>
            <person name="Barrell B.G."/>
            <person name="Kuspa A."/>
        </authorList>
    </citation>
    <scope>NUCLEOTIDE SEQUENCE [LARGE SCALE GENOMIC DNA]</scope>
    <source>
        <strain>AX4</strain>
    </source>
</reference>
<reference key="2">
    <citation type="journal article" date="2006" name="Eur. J. Cell Biol.">
        <title>The Dictyostelium repertoire of seven transmembrane domain receptors.</title>
        <authorList>
            <person name="Prabhu Y."/>
            <person name="Eichinger L."/>
        </authorList>
    </citation>
    <scope>NOMENCLATURE</scope>
</reference>